<evidence type="ECO:0000255" key="1">
    <source>
        <dbReference type="HAMAP-Rule" id="MF_00664"/>
    </source>
</evidence>
<dbReference type="EC" id="4.1.1.65" evidence="1"/>
<dbReference type="EMBL" id="CP000492">
    <property type="protein sequence ID" value="ABL64634.1"/>
    <property type="molecule type" value="Genomic_DNA"/>
</dbReference>
<dbReference type="RefSeq" id="WP_011744467.1">
    <property type="nucleotide sequence ID" value="NC_008639.1"/>
</dbReference>
<dbReference type="SMR" id="A1BE07"/>
<dbReference type="STRING" id="290317.Cpha266_0578"/>
<dbReference type="KEGG" id="cph:Cpha266_0578"/>
<dbReference type="eggNOG" id="COG0688">
    <property type="taxonomic scope" value="Bacteria"/>
</dbReference>
<dbReference type="HOGENOM" id="CLU_072492_2_0_10"/>
<dbReference type="OrthoDB" id="9790893at2"/>
<dbReference type="UniPathway" id="UPA00558">
    <property type="reaction ID" value="UER00616"/>
</dbReference>
<dbReference type="Proteomes" id="UP000008701">
    <property type="component" value="Chromosome"/>
</dbReference>
<dbReference type="GO" id="GO:0005886">
    <property type="term" value="C:plasma membrane"/>
    <property type="evidence" value="ECO:0007669"/>
    <property type="project" value="UniProtKB-SubCell"/>
</dbReference>
<dbReference type="GO" id="GO:0004609">
    <property type="term" value="F:phosphatidylserine decarboxylase activity"/>
    <property type="evidence" value="ECO:0007669"/>
    <property type="project" value="UniProtKB-UniRule"/>
</dbReference>
<dbReference type="GO" id="GO:0006646">
    <property type="term" value="P:phosphatidylethanolamine biosynthetic process"/>
    <property type="evidence" value="ECO:0007669"/>
    <property type="project" value="UniProtKB-UniRule"/>
</dbReference>
<dbReference type="HAMAP" id="MF_00664">
    <property type="entry name" value="PS_decarb_PSD_A"/>
    <property type="match status" value="1"/>
</dbReference>
<dbReference type="InterPro" id="IPR003817">
    <property type="entry name" value="PS_Dcarbxylase"/>
</dbReference>
<dbReference type="InterPro" id="IPR033175">
    <property type="entry name" value="PSD-A"/>
</dbReference>
<dbReference type="NCBIfam" id="NF003678">
    <property type="entry name" value="PRK05305.1-2"/>
    <property type="match status" value="1"/>
</dbReference>
<dbReference type="NCBIfam" id="NF003682">
    <property type="entry name" value="PRK05305.2-2"/>
    <property type="match status" value="1"/>
</dbReference>
<dbReference type="NCBIfam" id="NF003685">
    <property type="entry name" value="PRK05305.2-5"/>
    <property type="match status" value="1"/>
</dbReference>
<dbReference type="PANTHER" id="PTHR35809">
    <property type="entry name" value="ARCHAETIDYLSERINE DECARBOXYLASE PROENZYME-RELATED"/>
    <property type="match status" value="1"/>
</dbReference>
<dbReference type="PANTHER" id="PTHR35809:SF1">
    <property type="entry name" value="ARCHAETIDYLSERINE DECARBOXYLASE PROENZYME-RELATED"/>
    <property type="match status" value="1"/>
</dbReference>
<dbReference type="Pfam" id="PF02666">
    <property type="entry name" value="PS_Dcarbxylase"/>
    <property type="match status" value="1"/>
</dbReference>
<proteinExistence type="inferred from homology"/>
<name>PSD_CHLPD</name>
<organism>
    <name type="scientific">Chlorobium phaeobacteroides (strain DSM 266 / SMG 266 / 2430)</name>
    <dbReference type="NCBI Taxonomy" id="290317"/>
    <lineage>
        <taxon>Bacteria</taxon>
        <taxon>Pseudomonadati</taxon>
        <taxon>Chlorobiota</taxon>
        <taxon>Chlorobiia</taxon>
        <taxon>Chlorobiales</taxon>
        <taxon>Chlorobiaceae</taxon>
        <taxon>Chlorobium/Pelodictyon group</taxon>
        <taxon>Chlorobium</taxon>
    </lineage>
</organism>
<protein>
    <recommendedName>
        <fullName evidence="1">Phosphatidylserine decarboxylase proenzyme</fullName>
        <ecNumber evidence="1">4.1.1.65</ecNumber>
    </recommendedName>
    <component>
        <recommendedName>
            <fullName evidence="1">Phosphatidylserine decarboxylase alpha chain</fullName>
        </recommendedName>
    </component>
    <component>
        <recommendedName>
            <fullName evidence="1">Phosphatidylserine decarboxylase beta chain</fullName>
        </recommendedName>
    </component>
</protein>
<accession>A1BE07</accession>
<reference key="1">
    <citation type="submission" date="2006-12" db="EMBL/GenBank/DDBJ databases">
        <title>Complete sequence of Chlorobium phaeobacteroides DSM 266.</title>
        <authorList>
            <consortium name="US DOE Joint Genome Institute"/>
            <person name="Copeland A."/>
            <person name="Lucas S."/>
            <person name="Lapidus A."/>
            <person name="Barry K."/>
            <person name="Detter J.C."/>
            <person name="Glavina del Rio T."/>
            <person name="Hammon N."/>
            <person name="Israni S."/>
            <person name="Pitluck S."/>
            <person name="Goltsman E."/>
            <person name="Schmutz J."/>
            <person name="Larimer F."/>
            <person name="Land M."/>
            <person name="Hauser L."/>
            <person name="Mikhailova N."/>
            <person name="Li T."/>
            <person name="Overmann J."/>
            <person name="Bryant D.A."/>
            <person name="Richardson P."/>
        </authorList>
    </citation>
    <scope>NUCLEOTIDE SEQUENCE [LARGE SCALE GENOMIC DNA]</scope>
    <source>
        <strain>DSM 266 / SMG 266 / 2430</strain>
    </source>
</reference>
<comment type="function">
    <text evidence="1">Catalyzes the formation of phosphatidylethanolamine (PtdEtn) from phosphatidylserine (PtdSer).</text>
</comment>
<comment type="catalytic activity">
    <reaction evidence="1">
        <text>a 1,2-diacyl-sn-glycero-3-phospho-L-serine + H(+) = a 1,2-diacyl-sn-glycero-3-phosphoethanolamine + CO2</text>
        <dbReference type="Rhea" id="RHEA:20828"/>
        <dbReference type="ChEBI" id="CHEBI:15378"/>
        <dbReference type="ChEBI" id="CHEBI:16526"/>
        <dbReference type="ChEBI" id="CHEBI:57262"/>
        <dbReference type="ChEBI" id="CHEBI:64612"/>
        <dbReference type="EC" id="4.1.1.65"/>
    </reaction>
</comment>
<comment type="cofactor">
    <cofactor evidence="1">
        <name>pyruvate</name>
        <dbReference type="ChEBI" id="CHEBI:15361"/>
    </cofactor>
    <text evidence="1">Binds 1 pyruvoyl group covalently per subunit.</text>
</comment>
<comment type="pathway">
    <text evidence="1">Phospholipid metabolism; phosphatidylethanolamine biosynthesis; phosphatidylethanolamine from CDP-diacylglycerol: step 2/2.</text>
</comment>
<comment type="subunit">
    <text evidence="1">Heterodimer of a large membrane-associated beta subunit and a small pyruvoyl-containing alpha subunit.</text>
</comment>
<comment type="subcellular location">
    <subcellularLocation>
        <location evidence="1">Cell membrane</location>
        <topology evidence="1">Peripheral membrane protein</topology>
    </subcellularLocation>
</comment>
<comment type="PTM">
    <text evidence="1">Is synthesized initially as an inactive proenzyme. Formation of the active enzyme involves a self-maturation process in which the active site pyruvoyl group is generated from an internal serine residue via an autocatalytic post-translational modification. Two non-identical subunits are generated from the proenzyme in this reaction, and the pyruvate is formed at the N-terminus of the alpha chain, which is derived from the carboxyl end of the proenzyme. The post-translation cleavage follows an unusual pathway, termed non-hydrolytic serinolysis, in which the side chain hydroxyl group of the serine supplies its oxygen atom to form the C-terminus of the beta chain, while the remainder of the serine residue undergoes an oxidative deamination to produce ammonia and the pyruvoyl prosthetic group on the alpha chain.</text>
</comment>
<comment type="similarity">
    <text evidence="1">Belongs to the phosphatidylserine decarboxylase family. PSD-A subfamily.</text>
</comment>
<keyword id="KW-1003">Cell membrane</keyword>
<keyword id="KW-0210">Decarboxylase</keyword>
<keyword id="KW-0444">Lipid biosynthesis</keyword>
<keyword id="KW-0443">Lipid metabolism</keyword>
<keyword id="KW-0456">Lyase</keyword>
<keyword id="KW-0472">Membrane</keyword>
<keyword id="KW-0594">Phospholipid biosynthesis</keyword>
<keyword id="KW-1208">Phospholipid metabolism</keyword>
<keyword id="KW-0670">Pyruvate</keyword>
<keyword id="KW-1185">Reference proteome</keyword>
<keyword id="KW-0865">Zymogen</keyword>
<sequence>MPTSYGYTTLLKTTLVCCLLTALVSIFLPALLPLTATGSAAVIIFTLYFFRDPERRIPLDQQVIVAPADGKILLIQPLDHAFTGNDSTLVSIFMSPFNVHVNRIPLDGTIVHLRYVPGKFLMAFDNRSMESNEKMEIGIDNGSLRVLFIQVAGFLARRIVCPLHRNESVLSGKRFGMIKFGSRVDMILPAAVKIMVQSGQKTCAGETIIGRY</sequence>
<gene>
    <name evidence="1" type="primary">psd</name>
    <name type="ordered locus">Cpha266_0578</name>
</gene>
<feature type="chain" id="PRO_1000026646" description="Phosphatidylserine decarboxylase beta chain" evidence="1">
    <location>
        <begin position="1"/>
        <end position="181"/>
    </location>
</feature>
<feature type="chain" id="PRO_1000026647" description="Phosphatidylserine decarboxylase alpha chain" evidence="1">
    <location>
        <begin position="182"/>
        <end position="212"/>
    </location>
</feature>
<feature type="active site" description="Schiff-base intermediate with substrate; via pyruvic acid" evidence="1">
    <location>
        <position position="182"/>
    </location>
</feature>
<feature type="site" description="Cleavage (non-hydrolytic); by autocatalysis" evidence="1">
    <location>
        <begin position="181"/>
        <end position="182"/>
    </location>
</feature>
<feature type="modified residue" description="Pyruvic acid (Ser); by autocatalysis" evidence="1">
    <location>
        <position position="182"/>
    </location>
</feature>